<feature type="chain" id="PRO_0000414667" description="Cell division protein FtsQ">
    <location>
        <begin position="1"/>
        <end position="297"/>
    </location>
</feature>
<feature type="topological domain" description="Cytoplasmic" evidence="1">
    <location>
        <begin position="1"/>
        <end position="33"/>
    </location>
</feature>
<feature type="transmembrane region" description="Helical" evidence="1">
    <location>
        <begin position="34"/>
        <end position="54"/>
    </location>
</feature>
<feature type="topological domain" description="Periplasmic" evidence="1">
    <location>
        <begin position="55"/>
        <end position="297"/>
    </location>
</feature>
<feature type="domain" description="POTRA" evidence="2">
    <location>
        <begin position="82"/>
        <end position="150"/>
    </location>
</feature>
<keyword id="KW-0131">Cell cycle</keyword>
<keyword id="KW-0132">Cell division</keyword>
<keyword id="KW-0997">Cell inner membrane</keyword>
<keyword id="KW-1003">Cell membrane</keyword>
<keyword id="KW-0472">Membrane</keyword>
<keyword id="KW-1185">Reference proteome</keyword>
<keyword id="KW-0812">Transmembrane</keyword>
<keyword id="KW-1133">Transmembrane helix</keyword>
<organism>
    <name type="scientific">Dinoroseobacter shibae (strain DSM 16493 / NCIMB 14021 / DFL 12)</name>
    <dbReference type="NCBI Taxonomy" id="398580"/>
    <lineage>
        <taxon>Bacteria</taxon>
        <taxon>Pseudomonadati</taxon>
        <taxon>Pseudomonadota</taxon>
        <taxon>Alphaproteobacteria</taxon>
        <taxon>Rhodobacterales</taxon>
        <taxon>Roseobacteraceae</taxon>
        <taxon>Dinoroseobacter</taxon>
    </lineage>
</organism>
<name>FTSQ_DINSH</name>
<comment type="function">
    <text evidence="1">Essential cell division protein.</text>
</comment>
<comment type="subcellular location">
    <subcellularLocation>
        <location evidence="1">Cell inner membrane</location>
        <topology evidence="1">Single-pass type II membrane protein</topology>
    </subcellularLocation>
    <text evidence="1">Localizes to the division septum.</text>
</comment>
<comment type="similarity">
    <text evidence="1">Belongs to the FtsQ/DivIB family. FtsQ subfamily.</text>
</comment>
<sequence>MRPLSFRRRTAQARPDPAPSRLSYRVQRLLLTPLFHALIRVGLPAFVLAFGVGWLLQNQELRDELVAQTIALRTQIEQRPEFMVNAMSVSGASTELIEDIHEVVPIDFPVSSFALDLEAMDRIIGELDAVAEVDLSIQAAGILAIEIVERTPAVVWQTRQTLEILDAEGHRVGPIESRAAHAALPLVAGPGGNRAVAEALRLLEVAEELAPRIIGLQRMGERRWDVVLTEGQRILLPEREAELALARVIELDQAEDLFARDISVVDMRLPDRPTVRLNPDALDALWTIRGLTNDRIE</sequence>
<accession>A8LS59</accession>
<gene>
    <name evidence="1" type="primary">ftsQ</name>
    <name type="ordered locus">Dshi_2418</name>
</gene>
<protein>
    <recommendedName>
        <fullName evidence="1">Cell division protein FtsQ</fullName>
    </recommendedName>
</protein>
<proteinExistence type="inferred from homology"/>
<dbReference type="EMBL" id="CP000830">
    <property type="protein sequence ID" value="ABV94152.1"/>
    <property type="molecule type" value="Genomic_DNA"/>
</dbReference>
<dbReference type="RefSeq" id="WP_012179083.1">
    <property type="nucleotide sequence ID" value="NC_009952.1"/>
</dbReference>
<dbReference type="SMR" id="A8LS59"/>
<dbReference type="STRING" id="398580.Dshi_2418"/>
<dbReference type="KEGG" id="dsh:Dshi_2418"/>
<dbReference type="eggNOG" id="COG1589">
    <property type="taxonomic scope" value="Bacteria"/>
</dbReference>
<dbReference type="HOGENOM" id="CLU_061141_0_0_5"/>
<dbReference type="OrthoDB" id="9783091at2"/>
<dbReference type="Proteomes" id="UP000006833">
    <property type="component" value="Chromosome"/>
</dbReference>
<dbReference type="GO" id="GO:0032153">
    <property type="term" value="C:cell division site"/>
    <property type="evidence" value="ECO:0007669"/>
    <property type="project" value="UniProtKB-UniRule"/>
</dbReference>
<dbReference type="GO" id="GO:0005886">
    <property type="term" value="C:plasma membrane"/>
    <property type="evidence" value="ECO:0007669"/>
    <property type="project" value="UniProtKB-SubCell"/>
</dbReference>
<dbReference type="GO" id="GO:0090529">
    <property type="term" value="P:cell septum assembly"/>
    <property type="evidence" value="ECO:0007669"/>
    <property type="project" value="InterPro"/>
</dbReference>
<dbReference type="GO" id="GO:0043093">
    <property type="term" value="P:FtsZ-dependent cytokinesis"/>
    <property type="evidence" value="ECO:0007669"/>
    <property type="project" value="UniProtKB-UniRule"/>
</dbReference>
<dbReference type="Gene3D" id="3.40.50.11690">
    <property type="entry name" value="Cell division protein FtsQ/DivIB"/>
    <property type="match status" value="1"/>
</dbReference>
<dbReference type="HAMAP" id="MF_00911">
    <property type="entry name" value="FtsQ_subfam"/>
    <property type="match status" value="1"/>
</dbReference>
<dbReference type="InterPro" id="IPR005548">
    <property type="entry name" value="Cell_div_FtsQ/DivIB_C"/>
</dbReference>
<dbReference type="InterPro" id="IPR026579">
    <property type="entry name" value="FtsQ"/>
</dbReference>
<dbReference type="InterPro" id="IPR045335">
    <property type="entry name" value="FtsQ_C_sf"/>
</dbReference>
<dbReference type="InterPro" id="IPR034746">
    <property type="entry name" value="POTRA"/>
</dbReference>
<dbReference type="PANTHER" id="PTHR35851">
    <property type="entry name" value="CELL DIVISION PROTEIN FTSQ"/>
    <property type="match status" value="1"/>
</dbReference>
<dbReference type="PANTHER" id="PTHR35851:SF1">
    <property type="entry name" value="CELL DIVISION PROTEIN FTSQ"/>
    <property type="match status" value="1"/>
</dbReference>
<dbReference type="Pfam" id="PF03799">
    <property type="entry name" value="FtsQ_DivIB_C"/>
    <property type="match status" value="1"/>
</dbReference>
<dbReference type="PROSITE" id="PS51779">
    <property type="entry name" value="POTRA"/>
    <property type="match status" value="1"/>
</dbReference>
<reference key="1">
    <citation type="journal article" date="2010" name="ISME J.">
        <title>The complete genome sequence of the algal symbiont Dinoroseobacter shibae: a hitchhiker's guide to life in the sea.</title>
        <authorList>
            <person name="Wagner-Dobler I."/>
            <person name="Ballhausen B."/>
            <person name="Berger M."/>
            <person name="Brinkhoff T."/>
            <person name="Buchholz I."/>
            <person name="Bunk B."/>
            <person name="Cypionka H."/>
            <person name="Daniel R."/>
            <person name="Drepper T."/>
            <person name="Gerdts G."/>
            <person name="Hahnke S."/>
            <person name="Han C."/>
            <person name="Jahn D."/>
            <person name="Kalhoefer D."/>
            <person name="Kiss H."/>
            <person name="Klenk H.P."/>
            <person name="Kyrpides N."/>
            <person name="Liebl W."/>
            <person name="Liesegang H."/>
            <person name="Meincke L."/>
            <person name="Pati A."/>
            <person name="Petersen J."/>
            <person name="Piekarski T."/>
            <person name="Pommerenke C."/>
            <person name="Pradella S."/>
            <person name="Pukall R."/>
            <person name="Rabus R."/>
            <person name="Stackebrandt E."/>
            <person name="Thole S."/>
            <person name="Thompson L."/>
            <person name="Tielen P."/>
            <person name="Tomasch J."/>
            <person name="von Jan M."/>
            <person name="Wanphrut N."/>
            <person name="Wichels A."/>
            <person name="Zech H."/>
            <person name="Simon M."/>
        </authorList>
    </citation>
    <scope>NUCLEOTIDE SEQUENCE [LARGE SCALE GENOMIC DNA]</scope>
    <source>
        <strain>DSM 16493 / NCIMB 14021 / DFL 12</strain>
    </source>
</reference>
<evidence type="ECO:0000255" key="1">
    <source>
        <dbReference type="HAMAP-Rule" id="MF_00911"/>
    </source>
</evidence>
<evidence type="ECO:0000255" key="2">
    <source>
        <dbReference type="PROSITE-ProRule" id="PRU01115"/>
    </source>
</evidence>